<dbReference type="EC" id="3.1.1.31"/>
<dbReference type="EMBL" id="AE001273">
    <property type="protein sequence ID" value="AAC67778.1"/>
    <property type="molecule type" value="Genomic_DNA"/>
</dbReference>
<dbReference type="PIR" id="C71546">
    <property type="entry name" value="C71546"/>
</dbReference>
<dbReference type="RefSeq" id="NP_219690.1">
    <property type="nucleotide sequence ID" value="NC_000117.1"/>
</dbReference>
<dbReference type="RefSeq" id="WP_009871532.1">
    <property type="nucleotide sequence ID" value="NC_000117.1"/>
</dbReference>
<dbReference type="SMR" id="O84189"/>
<dbReference type="STRING" id="272561.CT_186"/>
<dbReference type="EnsemblBacteria" id="AAC67778">
    <property type="protein sequence ID" value="AAC67778"/>
    <property type="gene ID" value="CT_186"/>
</dbReference>
<dbReference type="GeneID" id="884943"/>
<dbReference type="KEGG" id="ctr:CT_186"/>
<dbReference type="PATRIC" id="fig|272561.5.peg.200"/>
<dbReference type="HOGENOM" id="CLU_053947_2_0_0"/>
<dbReference type="InParanoid" id="O84189"/>
<dbReference type="OrthoDB" id="9810967at2"/>
<dbReference type="UniPathway" id="UPA00115">
    <property type="reaction ID" value="UER00409"/>
</dbReference>
<dbReference type="Proteomes" id="UP000000431">
    <property type="component" value="Chromosome"/>
</dbReference>
<dbReference type="GO" id="GO:0017057">
    <property type="term" value="F:6-phosphogluconolactonase activity"/>
    <property type="evidence" value="ECO:0007669"/>
    <property type="project" value="UniProtKB-EC"/>
</dbReference>
<dbReference type="GO" id="GO:0005975">
    <property type="term" value="P:carbohydrate metabolic process"/>
    <property type="evidence" value="ECO:0007669"/>
    <property type="project" value="InterPro"/>
</dbReference>
<dbReference type="GO" id="GO:0006098">
    <property type="term" value="P:pentose-phosphate shunt"/>
    <property type="evidence" value="ECO:0007669"/>
    <property type="project" value="UniProtKB-UniPathway"/>
</dbReference>
<dbReference type="CDD" id="cd01400">
    <property type="entry name" value="6PGL"/>
    <property type="match status" value="1"/>
</dbReference>
<dbReference type="Gene3D" id="3.40.50.1360">
    <property type="match status" value="1"/>
</dbReference>
<dbReference type="InterPro" id="IPR005900">
    <property type="entry name" value="6-phosphogluconolactonase_DevB"/>
</dbReference>
<dbReference type="InterPro" id="IPR006148">
    <property type="entry name" value="Glc/Gal-6P_isomerase"/>
</dbReference>
<dbReference type="InterPro" id="IPR037171">
    <property type="entry name" value="NagB/RpiA_transferase-like"/>
</dbReference>
<dbReference type="InterPro" id="IPR039104">
    <property type="entry name" value="PGLS"/>
</dbReference>
<dbReference type="NCBIfam" id="TIGR01198">
    <property type="entry name" value="pgl"/>
    <property type="match status" value="1"/>
</dbReference>
<dbReference type="PANTHER" id="PTHR11054">
    <property type="entry name" value="6-PHOSPHOGLUCONOLACTONASE"/>
    <property type="match status" value="1"/>
</dbReference>
<dbReference type="PANTHER" id="PTHR11054:SF0">
    <property type="entry name" value="6-PHOSPHOGLUCONOLACTONASE"/>
    <property type="match status" value="1"/>
</dbReference>
<dbReference type="Pfam" id="PF01182">
    <property type="entry name" value="Glucosamine_iso"/>
    <property type="match status" value="1"/>
</dbReference>
<dbReference type="SUPFAM" id="SSF100950">
    <property type="entry name" value="NagB/RpiA/CoA transferase-like"/>
    <property type="match status" value="1"/>
</dbReference>
<organism>
    <name type="scientific">Chlamydia trachomatis serovar D (strain ATCC VR-885 / DSM 19411 / UW-3/Cx)</name>
    <dbReference type="NCBI Taxonomy" id="272561"/>
    <lineage>
        <taxon>Bacteria</taxon>
        <taxon>Pseudomonadati</taxon>
        <taxon>Chlamydiota</taxon>
        <taxon>Chlamydiia</taxon>
        <taxon>Chlamydiales</taxon>
        <taxon>Chlamydiaceae</taxon>
        <taxon>Chlamydia/Chlamydophila group</taxon>
        <taxon>Chlamydia</taxon>
    </lineage>
</organism>
<keyword id="KW-0378">Hydrolase</keyword>
<keyword id="KW-1185">Reference proteome</keyword>
<accession>O84189</accession>
<proteinExistence type="inferred from homology"/>
<gene>
    <name type="primary">pgl</name>
    <name type="synonym">devB</name>
    <name type="ordered locus">CT_186</name>
</gene>
<comment type="function">
    <text>Hydrolysis of 6-phosphogluconolactone to 6-phosphogluconate.</text>
</comment>
<comment type="catalytic activity">
    <reaction>
        <text>6-phospho-D-glucono-1,5-lactone + H2O = 6-phospho-D-gluconate + H(+)</text>
        <dbReference type="Rhea" id="RHEA:12556"/>
        <dbReference type="ChEBI" id="CHEBI:15377"/>
        <dbReference type="ChEBI" id="CHEBI:15378"/>
        <dbReference type="ChEBI" id="CHEBI:57955"/>
        <dbReference type="ChEBI" id="CHEBI:58759"/>
        <dbReference type="EC" id="3.1.1.31"/>
    </reaction>
</comment>
<comment type="pathway">
    <text>Carbohydrate degradation; pentose phosphate pathway; D-ribulose 5-phosphate from D-glucose 6-phosphate (oxidative stage): step 2/3.</text>
</comment>
<comment type="similarity">
    <text evidence="1">Belongs to the glucosamine/galactosamine-6-phosphate isomerase family. 6-phosphogluconolactonase subfamily.</text>
</comment>
<feature type="chain" id="PRO_0000090093" description="6-phosphogluconolactonase">
    <location>
        <begin position="1"/>
        <end position="256"/>
    </location>
</feature>
<sequence>MATLISLNDANRMLIADSQEEFLQIACYDWISTANKAIHKRGAFYVALSGGKTPLQIFQEIVKKRAAISDCSKIVVFWGDERANEDVEAGSNYLKAMDILKGLRIPEDQIFRMDTADPKGDEAYEALIQKYVPDAIFDMVMLGVGEDGHTLSLFPETHALEEKERFVVFNEVPQLHTRRMTLTFPIVRQARHLVAYVQGENKQDLFHKLVHPLGRDTFPIERVGTPLNPVQWVLSSDSCRKTDLADIPADCKLEMF</sequence>
<name>6PGL_CHLTR</name>
<evidence type="ECO:0000305" key="1"/>
<reference key="1">
    <citation type="journal article" date="1998" name="Science">
        <title>Genome sequence of an obligate intracellular pathogen of humans: Chlamydia trachomatis.</title>
        <authorList>
            <person name="Stephens R.S."/>
            <person name="Kalman S."/>
            <person name="Lammel C.J."/>
            <person name="Fan J."/>
            <person name="Marathe R."/>
            <person name="Aravind L."/>
            <person name="Mitchell W.P."/>
            <person name="Olinger L."/>
            <person name="Tatusov R.L."/>
            <person name="Zhao Q."/>
            <person name="Koonin E.V."/>
            <person name="Davis R.W."/>
        </authorList>
    </citation>
    <scope>NUCLEOTIDE SEQUENCE [LARGE SCALE GENOMIC DNA]</scope>
    <source>
        <strain>ATCC VR-885 / DSM 19411 / UW-3/Cx</strain>
    </source>
</reference>
<protein>
    <recommendedName>
        <fullName>6-phosphogluconolactonase</fullName>
        <shortName>6PGL</shortName>
        <ecNumber>3.1.1.31</ecNumber>
    </recommendedName>
</protein>